<name>SYM_BURO1</name>
<accession>Q1BUH6</accession>
<proteinExistence type="inferred from homology"/>
<dbReference type="EC" id="6.1.1.10" evidence="1"/>
<dbReference type="EMBL" id="CP000378">
    <property type="protein sequence ID" value="ABF76729.1"/>
    <property type="status" value="ALT_INIT"/>
    <property type="molecule type" value="Genomic_DNA"/>
</dbReference>
<dbReference type="SMR" id="Q1BUH6"/>
<dbReference type="HOGENOM" id="CLU_009710_7_0_4"/>
<dbReference type="GO" id="GO:0005829">
    <property type="term" value="C:cytosol"/>
    <property type="evidence" value="ECO:0007669"/>
    <property type="project" value="TreeGrafter"/>
</dbReference>
<dbReference type="GO" id="GO:0005524">
    <property type="term" value="F:ATP binding"/>
    <property type="evidence" value="ECO:0007669"/>
    <property type="project" value="UniProtKB-UniRule"/>
</dbReference>
<dbReference type="GO" id="GO:0046872">
    <property type="term" value="F:metal ion binding"/>
    <property type="evidence" value="ECO:0007669"/>
    <property type="project" value="UniProtKB-KW"/>
</dbReference>
<dbReference type="GO" id="GO:0004825">
    <property type="term" value="F:methionine-tRNA ligase activity"/>
    <property type="evidence" value="ECO:0007669"/>
    <property type="project" value="UniProtKB-UniRule"/>
</dbReference>
<dbReference type="GO" id="GO:0000049">
    <property type="term" value="F:tRNA binding"/>
    <property type="evidence" value="ECO:0007669"/>
    <property type="project" value="UniProtKB-KW"/>
</dbReference>
<dbReference type="GO" id="GO:0006431">
    <property type="term" value="P:methionyl-tRNA aminoacylation"/>
    <property type="evidence" value="ECO:0007669"/>
    <property type="project" value="UniProtKB-UniRule"/>
</dbReference>
<dbReference type="CDD" id="cd07957">
    <property type="entry name" value="Anticodon_Ia_Met"/>
    <property type="match status" value="1"/>
</dbReference>
<dbReference type="CDD" id="cd00814">
    <property type="entry name" value="MetRS_core"/>
    <property type="match status" value="1"/>
</dbReference>
<dbReference type="CDD" id="cd02800">
    <property type="entry name" value="tRNA_bind_EcMetRS_like"/>
    <property type="match status" value="1"/>
</dbReference>
<dbReference type="FunFam" id="2.20.28.20:FF:000001">
    <property type="entry name" value="Methionine--tRNA ligase"/>
    <property type="match status" value="1"/>
</dbReference>
<dbReference type="FunFam" id="2.40.50.140:FF:000042">
    <property type="entry name" value="Methionine--tRNA ligase"/>
    <property type="match status" value="1"/>
</dbReference>
<dbReference type="Gene3D" id="3.40.50.620">
    <property type="entry name" value="HUPs"/>
    <property type="match status" value="1"/>
</dbReference>
<dbReference type="Gene3D" id="1.10.730.10">
    <property type="entry name" value="Isoleucyl-tRNA Synthetase, Domain 1"/>
    <property type="match status" value="1"/>
</dbReference>
<dbReference type="Gene3D" id="2.20.28.20">
    <property type="entry name" value="Methionyl-tRNA synthetase, Zn-domain"/>
    <property type="match status" value="1"/>
</dbReference>
<dbReference type="Gene3D" id="2.40.50.140">
    <property type="entry name" value="Nucleic acid-binding proteins"/>
    <property type="match status" value="1"/>
</dbReference>
<dbReference type="HAMAP" id="MF_00098">
    <property type="entry name" value="Met_tRNA_synth_type1"/>
    <property type="match status" value="1"/>
</dbReference>
<dbReference type="InterPro" id="IPR001412">
    <property type="entry name" value="aa-tRNA-synth_I_CS"/>
</dbReference>
<dbReference type="InterPro" id="IPR041872">
    <property type="entry name" value="Anticodon_Met"/>
</dbReference>
<dbReference type="InterPro" id="IPR004495">
    <property type="entry name" value="Met-tRNA-synth_bsu_C"/>
</dbReference>
<dbReference type="InterPro" id="IPR023458">
    <property type="entry name" value="Met-tRNA_ligase_1"/>
</dbReference>
<dbReference type="InterPro" id="IPR014758">
    <property type="entry name" value="Met-tRNA_synth"/>
</dbReference>
<dbReference type="InterPro" id="IPR015413">
    <property type="entry name" value="Methionyl/Leucyl_tRNA_Synth"/>
</dbReference>
<dbReference type="InterPro" id="IPR033911">
    <property type="entry name" value="MetRS_core"/>
</dbReference>
<dbReference type="InterPro" id="IPR029038">
    <property type="entry name" value="MetRS_Zn"/>
</dbReference>
<dbReference type="InterPro" id="IPR012340">
    <property type="entry name" value="NA-bd_OB-fold"/>
</dbReference>
<dbReference type="InterPro" id="IPR014729">
    <property type="entry name" value="Rossmann-like_a/b/a_fold"/>
</dbReference>
<dbReference type="InterPro" id="IPR002547">
    <property type="entry name" value="tRNA-bd_dom"/>
</dbReference>
<dbReference type="InterPro" id="IPR009080">
    <property type="entry name" value="tRNAsynth_Ia_anticodon-bd"/>
</dbReference>
<dbReference type="NCBIfam" id="TIGR00398">
    <property type="entry name" value="metG"/>
    <property type="match status" value="1"/>
</dbReference>
<dbReference type="NCBIfam" id="TIGR00399">
    <property type="entry name" value="metG_C_term"/>
    <property type="match status" value="1"/>
</dbReference>
<dbReference type="NCBIfam" id="NF001100">
    <property type="entry name" value="PRK00133.1"/>
    <property type="match status" value="1"/>
</dbReference>
<dbReference type="PANTHER" id="PTHR45765">
    <property type="entry name" value="METHIONINE--TRNA LIGASE"/>
    <property type="match status" value="1"/>
</dbReference>
<dbReference type="PANTHER" id="PTHR45765:SF1">
    <property type="entry name" value="METHIONINE--TRNA LIGASE, CYTOPLASMIC"/>
    <property type="match status" value="1"/>
</dbReference>
<dbReference type="Pfam" id="PF09334">
    <property type="entry name" value="tRNA-synt_1g"/>
    <property type="match status" value="1"/>
</dbReference>
<dbReference type="Pfam" id="PF01588">
    <property type="entry name" value="tRNA_bind"/>
    <property type="match status" value="1"/>
</dbReference>
<dbReference type="PRINTS" id="PR01041">
    <property type="entry name" value="TRNASYNTHMET"/>
</dbReference>
<dbReference type="SUPFAM" id="SSF47323">
    <property type="entry name" value="Anticodon-binding domain of a subclass of class I aminoacyl-tRNA synthetases"/>
    <property type="match status" value="1"/>
</dbReference>
<dbReference type="SUPFAM" id="SSF57770">
    <property type="entry name" value="Methionyl-tRNA synthetase (MetRS), Zn-domain"/>
    <property type="match status" value="1"/>
</dbReference>
<dbReference type="SUPFAM" id="SSF50249">
    <property type="entry name" value="Nucleic acid-binding proteins"/>
    <property type="match status" value="1"/>
</dbReference>
<dbReference type="SUPFAM" id="SSF52374">
    <property type="entry name" value="Nucleotidylyl transferase"/>
    <property type="match status" value="1"/>
</dbReference>
<dbReference type="PROSITE" id="PS00178">
    <property type="entry name" value="AA_TRNA_LIGASE_I"/>
    <property type="match status" value="1"/>
</dbReference>
<dbReference type="PROSITE" id="PS50886">
    <property type="entry name" value="TRBD"/>
    <property type="match status" value="1"/>
</dbReference>
<gene>
    <name evidence="1" type="primary">metG</name>
    <name type="ordered locus">Bcen_1826</name>
</gene>
<protein>
    <recommendedName>
        <fullName evidence="1">Methionine--tRNA ligase</fullName>
        <ecNumber evidence="1">6.1.1.10</ecNumber>
    </recommendedName>
    <alternativeName>
        <fullName evidence="1">Methionyl-tRNA synthetase</fullName>
        <shortName evidence="1">MetRS</shortName>
    </alternativeName>
</protein>
<organism>
    <name type="scientific">Burkholderia orbicola (strain AU 1054)</name>
    <dbReference type="NCBI Taxonomy" id="331271"/>
    <lineage>
        <taxon>Bacteria</taxon>
        <taxon>Pseudomonadati</taxon>
        <taxon>Pseudomonadota</taxon>
        <taxon>Betaproteobacteria</taxon>
        <taxon>Burkholderiales</taxon>
        <taxon>Burkholderiaceae</taxon>
        <taxon>Burkholderia</taxon>
        <taxon>Burkholderia cepacia complex</taxon>
        <taxon>Burkholderia orbicola</taxon>
    </lineage>
</organism>
<keyword id="KW-0030">Aminoacyl-tRNA synthetase</keyword>
<keyword id="KW-0067">ATP-binding</keyword>
<keyword id="KW-0963">Cytoplasm</keyword>
<keyword id="KW-0436">Ligase</keyword>
<keyword id="KW-0479">Metal-binding</keyword>
<keyword id="KW-0547">Nucleotide-binding</keyword>
<keyword id="KW-0648">Protein biosynthesis</keyword>
<keyword id="KW-0694">RNA-binding</keyword>
<keyword id="KW-0820">tRNA-binding</keyword>
<keyword id="KW-0862">Zinc</keyword>
<comment type="function">
    <text evidence="1">Is required not only for elongation of protein synthesis but also for the initiation of all mRNA translation through initiator tRNA(fMet) aminoacylation.</text>
</comment>
<comment type="catalytic activity">
    <reaction evidence="1">
        <text>tRNA(Met) + L-methionine + ATP = L-methionyl-tRNA(Met) + AMP + diphosphate</text>
        <dbReference type="Rhea" id="RHEA:13481"/>
        <dbReference type="Rhea" id="RHEA-COMP:9667"/>
        <dbReference type="Rhea" id="RHEA-COMP:9698"/>
        <dbReference type="ChEBI" id="CHEBI:30616"/>
        <dbReference type="ChEBI" id="CHEBI:33019"/>
        <dbReference type="ChEBI" id="CHEBI:57844"/>
        <dbReference type="ChEBI" id="CHEBI:78442"/>
        <dbReference type="ChEBI" id="CHEBI:78530"/>
        <dbReference type="ChEBI" id="CHEBI:456215"/>
        <dbReference type="EC" id="6.1.1.10"/>
    </reaction>
</comment>
<comment type="cofactor">
    <cofactor evidence="1">
        <name>Zn(2+)</name>
        <dbReference type="ChEBI" id="CHEBI:29105"/>
    </cofactor>
    <text evidence="1">Binds 1 zinc ion per subunit.</text>
</comment>
<comment type="subunit">
    <text evidence="1">Homodimer.</text>
</comment>
<comment type="subcellular location">
    <subcellularLocation>
        <location evidence="1">Cytoplasm</location>
    </subcellularLocation>
</comment>
<comment type="similarity">
    <text evidence="1">Belongs to the class-I aminoacyl-tRNA synthetase family. MetG type 1 subfamily.</text>
</comment>
<comment type="sequence caution" evidence="2">
    <conflict type="erroneous initiation">
        <sequence resource="EMBL-CDS" id="ABF76729"/>
    </conflict>
</comment>
<feature type="chain" id="PRO_0000331787" description="Methionine--tRNA ligase">
    <location>
        <begin position="1"/>
        <end position="718"/>
    </location>
</feature>
<feature type="domain" description="tRNA-binding" evidence="1">
    <location>
        <begin position="612"/>
        <end position="718"/>
    </location>
</feature>
<feature type="short sequence motif" description="'HIGH' region">
    <location>
        <begin position="27"/>
        <end position="37"/>
    </location>
</feature>
<feature type="short sequence motif" description="'KMSKS' region">
    <location>
        <begin position="348"/>
        <end position="352"/>
    </location>
</feature>
<feature type="binding site" evidence="1">
    <location>
        <position position="158"/>
    </location>
    <ligand>
        <name>Zn(2+)</name>
        <dbReference type="ChEBI" id="CHEBI:29105"/>
    </ligand>
</feature>
<feature type="binding site" evidence="1">
    <location>
        <position position="161"/>
    </location>
    <ligand>
        <name>Zn(2+)</name>
        <dbReference type="ChEBI" id="CHEBI:29105"/>
    </ligand>
</feature>
<feature type="binding site" evidence="1">
    <location>
        <position position="171"/>
    </location>
    <ligand>
        <name>Zn(2+)</name>
        <dbReference type="ChEBI" id="CHEBI:29105"/>
    </ligand>
</feature>
<feature type="binding site" evidence="1">
    <location>
        <position position="174"/>
    </location>
    <ligand>
        <name>Zn(2+)</name>
        <dbReference type="ChEBI" id="CHEBI:29105"/>
    </ligand>
</feature>
<feature type="binding site" evidence="1">
    <location>
        <position position="351"/>
    </location>
    <ligand>
        <name>ATP</name>
        <dbReference type="ChEBI" id="CHEBI:30616"/>
    </ligand>
</feature>
<sequence length="718" mass="79227">MSASDLTSVQAAAPQGSRQILVTSALPYANGQIHIGHLVEYIQTDIWVRTLRMHGHEVYYIGADDTHGTPIMLRAEKEGLTPKQLIDRVWTEHKRDFDSFGVSFDNFYTTDSEENRVLSENIYLALQEAGLIAEREIEQAYDPVKEMFLPDRFIKGECPKCHAKDQYGDSCEVCGSTYLPTELLNPYSVVSGATPVRKTSKHYFFRLSDPRCESFLREWVSGLAQPEATNKMREWLGDAGESKLADWDISRDAPYFGFEIPGAPGKYFYVWLDAPVGYYASFKNLCERNGIDFDAWIRPGSKAEQYHFIGKDILYFHTLFWPAMLEFSGHRTPTNVFAHGFLTVDGAKMSKSRGTFITAQSYIDTGLNPEWLRYYFAAKLNATMEDIDLNLDDFQARVNSDLVGKYVNIASRAAGFLIKRFDGRVQDSAMNHPLVAKLRDAIPQIAASYEAREYGRALRHTMELADEVNAYVDGAKPWDLAKDPANAVALHETCSVSLEAFRLLSLALKPVMPRVAVAVEAFFGIAPLAWADAAKPLSSAQPIKAYQHLMTRVDAKQIEALLAANRDSLQAEAAGAAAAGANAAKDAKSNAKASAKPAAVNGADDAPISIDDFAKIDLRIAKIVACQAVEGSDKLLQLTLDVGEEKTRNVFSGIKSAYQPEQLVGKLTVMVANLAPRKMKFGLSEGMVLAASATDEKAEPGLYILEPHSGAKPGMRVK</sequence>
<reference key="1">
    <citation type="submission" date="2006-05" db="EMBL/GenBank/DDBJ databases">
        <title>Complete sequence of chromosome 1 of Burkholderia cenocepacia AU 1054.</title>
        <authorList>
            <consortium name="US DOE Joint Genome Institute"/>
            <person name="Copeland A."/>
            <person name="Lucas S."/>
            <person name="Lapidus A."/>
            <person name="Barry K."/>
            <person name="Detter J.C."/>
            <person name="Glavina del Rio T."/>
            <person name="Hammon N."/>
            <person name="Israni S."/>
            <person name="Dalin E."/>
            <person name="Tice H."/>
            <person name="Pitluck S."/>
            <person name="Chain P."/>
            <person name="Malfatti S."/>
            <person name="Shin M."/>
            <person name="Vergez L."/>
            <person name="Schmutz J."/>
            <person name="Larimer F."/>
            <person name="Land M."/>
            <person name="Hauser L."/>
            <person name="Kyrpides N."/>
            <person name="Lykidis A."/>
            <person name="LiPuma J.J."/>
            <person name="Konstantinidis K."/>
            <person name="Tiedje J.M."/>
            <person name="Richardson P."/>
        </authorList>
    </citation>
    <scope>NUCLEOTIDE SEQUENCE [LARGE SCALE GENOMIC DNA]</scope>
    <source>
        <strain>AU 1054</strain>
    </source>
</reference>
<evidence type="ECO:0000255" key="1">
    <source>
        <dbReference type="HAMAP-Rule" id="MF_00098"/>
    </source>
</evidence>
<evidence type="ECO:0000305" key="2"/>